<dbReference type="EMBL" id="AP009384">
    <property type="protein sequence ID" value="BAF87144.1"/>
    <property type="molecule type" value="Genomic_DNA"/>
</dbReference>
<dbReference type="RefSeq" id="WP_012169677.1">
    <property type="nucleotide sequence ID" value="NC_009937.1"/>
</dbReference>
<dbReference type="SMR" id="A8HR94"/>
<dbReference type="STRING" id="438753.AZC_1146"/>
<dbReference type="KEGG" id="azc:AZC_1146"/>
<dbReference type="eggNOG" id="COG0782">
    <property type="taxonomic scope" value="Bacteria"/>
</dbReference>
<dbReference type="HOGENOM" id="CLU_101379_2_0_5"/>
<dbReference type="Proteomes" id="UP000000270">
    <property type="component" value="Chromosome"/>
</dbReference>
<dbReference type="GO" id="GO:0003677">
    <property type="term" value="F:DNA binding"/>
    <property type="evidence" value="ECO:0007669"/>
    <property type="project" value="UniProtKB-UniRule"/>
</dbReference>
<dbReference type="GO" id="GO:0070063">
    <property type="term" value="F:RNA polymerase binding"/>
    <property type="evidence" value="ECO:0007669"/>
    <property type="project" value="InterPro"/>
</dbReference>
<dbReference type="GO" id="GO:0006354">
    <property type="term" value="P:DNA-templated transcription elongation"/>
    <property type="evidence" value="ECO:0007669"/>
    <property type="project" value="TreeGrafter"/>
</dbReference>
<dbReference type="GO" id="GO:0032784">
    <property type="term" value="P:regulation of DNA-templated transcription elongation"/>
    <property type="evidence" value="ECO:0007669"/>
    <property type="project" value="UniProtKB-UniRule"/>
</dbReference>
<dbReference type="FunFam" id="1.10.287.180:FF:000001">
    <property type="entry name" value="Transcription elongation factor GreA"/>
    <property type="match status" value="1"/>
</dbReference>
<dbReference type="FunFam" id="3.10.50.30:FF:000001">
    <property type="entry name" value="Transcription elongation factor GreA"/>
    <property type="match status" value="1"/>
</dbReference>
<dbReference type="Gene3D" id="3.10.50.30">
    <property type="entry name" value="Transcription elongation factor, GreA/GreB, C-terminal domain"/>
    <property type="match status" value="1"/>
</dbReference>
<dbReference type="Gene3D" id="1.10.287.180">
    <property type="entry name" value="Transcription elongation factor, GreA/GreB, N-terminal domain"/>
    <property type="match status" value="1"/>
</dbReference>
<dbReference type="HAMAP" id="MF_00105">
    <property type="entry name" value="GreA_GreB"/>
    <property type="match status" value="1"/>
</dbReference>
<dbReference type="InterPro" id="IPR036953">
    <property type="entry name" value="GreA/GreB_C_sf"/>
</dbReference>
<dbReference type="InterPro" id="IPR018151">
    <property type="entry name" value="TF_GreA/GreB_CS"/>
</dbReference>
<dbReference type="InterPro" id="IPR006359">
    <property type="entry name" value="Tscrpt_elong_fac_GreA"/>
</dbReference>
<dbReference type="InterPro" id="IPR028624">
    <property type="entry name" value="Tscrpt_elong_fac_GreA/B"/>
</dbReference>
<dbReference type="InterPro" id="IPR001437">
    <property type="entry name" value="Tscrpt_elong_fac_GreA/B_C"/>
</dbReference>
<dbReference type="InterPro" id="IPR023459">
    <property type="entry name" value="Tscrpt_elong_fac_GreA/B_fam"/>
</dbReference>
<dbReference type="InterPro" id="IPR022691">
    <property type="entry name" value="Tscrpt_elong_fac_GreA/B_N"/>
</dbReference>
<dbReference type="InterPro" id="IPR036805">
    <property type="entry name" value="Tscrpt_elong_fac_GreA/B_N_sf"/>
</dbReference>
<dbReference type="NCBIfam" id="TIGR01462">
    <property type="entry name" value="greA"/>
    <property type="match status" value="1"/>
</dbReference>
<dbReference type="NCBIfam" id="NF001261">
    <property type="entry name" value="PRK00226.1-2"/>
    <property type="match status" value="1"/>
</dbReference>
<dbReference type="NCBIfam" id="NF001263">
    <property type="entry name" value="PRK00226.1-4"/>
    <property type="match status" value="1"/>
</dbReference>
<dbReference type="NCBIfam" id="NF001264">
    <property type="entry name" value="PRK00226.1-5"/>
    <property type="match status" value="1"/>
</dbReference>
<dbReference type="PANTHER" id="PTHR30437">
    <property type="entry name" value="TRANSCRIPTION ELONGATION FACTOR GREA"/>
    <property type="match status" value="1"/>
</dbReference>
<dbReference type="PANTHER" id="PTHR30437:SF4">
    <property type="entry name" value="TRANSCRIPTION ELONGATION FACTOR GREA"/>
    <property type="match status" value="1"/>
</dbReference>
<dbReference type="Pfam" id="PF01272">
    <property type="entry name" value="GreA_GreB"/>
    <property type="match status" value="1"/>
</dbReference>
<dbReference type="Pfam" id="PF03449">
    <property type="entry name" value="GreA_GreB_N"/>
    <property type="match status" value="1"/>
</dbReference>
<dbReference type="PIRSF" id="PIRSF006092">
    <property type="entry name" value="GreA_GreB"/>
    <property type="match status" value="1"/>
</dbReference>
<dbReference type="SUPFAM" id="SSF54534">
    <property type="entry name" value="FKBP-like"/>
    <property type="match status" value="1"/>
</dbReference>
<dbReference type="SUPFAM" id="SSF46557">
    <property type="entry name" value="GreA transcript cleavage protein, N-terminal domain"/>
    <property type="match status" value="1"/>
</dbReference>
<dbReference type="PROSITE" id="PS00829">
    <property type="entry name" value="GREAB_1"/>
    <property type="match status" value="1"/>
</dbReference>
<feature type="chain" id="PRO_1000075855" description="Transcription elongation factor GreA">
    <location>
        <begin position="1"/>
        <end position="157"/>
    </location>
</feature>
<reference key="1">
    <citation type="submission" date="2007-04" db="EMBL/GenBank/DDBJ databases">
        <title>Complete genome sequence of the nitrogen-fixing bacterium Azorhizobium caulinodans ORS571.</title>
        <authorList>
            <person name="Lee K.B."/>
            <person name="Backer P.D."/>
            <person name="Aono T."/>
            <person name="Liu C.T."/>
            <person name="Suzuki S."/>
            <person name="Suzuki T."/>
            <person name="Kaneko T."/>
            <person name="Yamada M."/>
            <person name="Tabata S."/>
            <person name="Kupfer D.M."/>
            <person name="Najar F.Z."/>
            <person name="Wiley G.B."/>
            <person name="Roe B."/>
            <person name="Binnewies T."/>
            <person name="Ussery D."/>
            <person name="Vereecke D."/>
            <person name="Gevers D."/>
            <person name="Holsters M."/>
            <person name="Oyaizu H."/>
        </authorList>
    </citation>
    <scope>NUCLEOTIDE SEQUENCE [LARGE SCALE GENOMIC DNA]</scope>
    <source>
        <strain>ATCC 43989 / DSM 5975 / JCM 20966 / LMG 6465 / NBRC 14845 / NCIMB 13405 / ORS 571</strain>
    </source>
</reference>
<name>GREA_AZOC5</name>
<accession>A8HR94</accession>
<protein>
    <recommendedName>
        <fullName evidence="1">Transcription elongation factor GreA</fullName>
    </recommendedName>
    <alternativeName>
        <fullName evidence="1">Transcript cleavage factor GreA</fullName>
    </alternativeName>
</protein>
<comment type="function">
    <text evidence="1">Necessary for efficient RNA polymerase transcription elongation past template-encoded arresting sites. The arresting sites in DNA have the property of trapping a certain fraction of elongating RNA polymerases that pass through, resulting in locked ternary complexes. Cleavage of the nascent transcript by cleavage factors such as GreA or GreB allows the resumption of elongation from the new 3'terminus. GreA releases sequences of 2 to 3 nucleotides.</text>
</comment>
<comment type="similarity">
    <text evidence="1">Belongs to the GreA/GreB family.</text>
</comment>
<proteinExistence type="inferred from homology"/>
<sequence length="157" mass="17204">MEKIPMTGAGFVALEEELRFRQQVERPRIISAISEARAHGDLSENAEYHAAKELQSLNEGRIAELEDKISRAEVIDVSKLSGDIVKFGATVTLVDEDTEEERVWQIVGDSEADAKAGRISISSPVARALIGKKKGSSVEVVTPKGARSFEIVEVRWA</sequence>
<keyword id="KW-0238">DNA-binding</keyword>
<keyword id="KW-1185">Reference proteome</keyword>
<keyword id="KW-0804">Transcription</keyword>
<keyword id="KW-0805">Transcription regulation</keyword>
<organism>
    <name type="scientific">Azorhizobium caulinodans (strain ATCC 43989 / DSM 5975 / JCM 20966 / LMG 6465 / NBRC 14845 / NCIMB 13405 / ORS 571)</name>
    <dbReference type="NCBI Taxonomy" id="438753"/>
    <lineage>
        <taxon>Bacteria</taxon>
        <taxon>Pseudomonadati</taxon>
        <taxon>Pseudomonadota</taxon>
        <taxon>Alphaproteobacteria</taxon>
        <taxon>Hyphomicrobiales</taxon>
        <taxon>Xanthobacteraceae</taxon>
        <taxon>Azorhizobium</taxon>
    </lineage>
</organism>
<evidence type="ECO:0000255" key="1">
    <source>
        <dbReference type="HAMAP-Rule" id="MF_00105"/>
    </source>
</evidence>
<gene>
    <name evidence="1" type="primary">greA</name>
    <name type="ordered locus">AZC_1146</name>
</gene>